<accession>Q95XR4</accession>
<keyword id="KW-0072">Autophagy</keyword>
<keyword id="KW-0175">Coiled coil</keyword>
<keyword id="KW-0963">Cytoplasm</keyword>
<keyword id="KW-1185">Reference proteome</keyword>
<proteinExistence type="evidence at protein level"/>
<gene>
    <name evidence="9" type="primary">epg-2</name>
    <name evidence="9" type="ORF">Y39G10AR.10</name>
</gene>
<name>EPG2_CAEEL</name>
<dbReference type="EMBL" id="FO081209">
    <property type="protein sequence ID" value="CCD69908.1"/>
    <property type="molecule type" value="Genomic_DNA"/>
</dbReference>
<dbReference type="RefSeq" id="NP_490955.1">
    <property type="nucleotide sequence ID" value="NM_058554.7"/>
</dbReference>
<dbReference type="SMR" id="Q95XR4"/>
<dbReference type="BioGRID" id="37273">
    <property type="interactions" value="10"/>
</dbReference>
<dbReference type="DIP" id="DIP-27321N"/>
<dbReference type="FunCoup" id="Q95XR4">
    <property type="interactions" value="1846"/>
</dbReference>
<dbReference type="IntAct" id="Q95XR4">
    <property type="interactions" value="4"/>
</dbReference>
<dbReference type="STRING" id="6239.Y39G10AR.10.1"/>
<dbReference type="PaxDb" id="6239-Y39G10AR.10"/>
<dbReference type="PeptideAtlas" id="Q95XR4"/>
<dbReference type="EnsemblMetazoa" id="Y39G10AR.10.1">
    <property type="protein sequence ID" value="Y39G10AR.10.1"/>
    <property type="gene ID" value="WBGene00021468"/>
</dbReference>
<dbReference type="GeneID" id="171787"/>
<dbReference type="KEGG" id="cel:CELE_Y39G10AR.10"/>
<dbReference type="UCSC" id="Y39G10AR.10">
    <property type="organism name" value="c. elegans"/>
</dbReference>
<dbReference type="AGR" id="WB:WBGene00021468"/>
<dbReference type="CTD" id="171787"/>
<dbReference type="WormBase" id="Y39G10AR.10">
    <property type="protein sequence ID" value="CE26989"/>
    <property type="gene ID" value="WBGene00021468"/>
    <property type="gene designation" value="epg-2"/>
</dbReference>
<dbReference type="eggNOG" id="ENOG502THXW">
    <property type="taxonomic scope" value="Eukaryota"/>
</dbReference>
<dbReference type="HOGENOM" id="CLU_430982_0_0_1"/>
<dbReference type="InParanoid" id="Q95XR4"/>
<dbReference type="OMA" id="YNHMLAI"/>
<dbReference type="OrthoDB" id="5833447at2759"/>
<dbReference type="PhylomeDB" id="Q95XR4"/>
<dbReference type="CD-CODE" id="50E9090F">
    <property type="entry name" value="Synthetic Condensate 000137"/>
</dbReference>
<dbReference type="CD-CODE" id="73A75392">
    <property type="entry name" value="P-granule"/>
</dbReference>
<dbReference type="CD-CODE" id="D8841629">
    <property type="entry name" value="Synthetic Condensate 000136"/>
</dbReference>
<dbReference type="CD-CODE" id="F6300417">
    <property type="entry name" value="Synthetic Condensate 000082"/>
</dbReference>
<dbReference type="PRO" id="PR:Q95XR4"/>
<dbReference type="Proteomes" id="UP000001940">
    <property type="component" value="Chromosome I"/>
</dbReference>
<dbReference type="Bgee" id="WBGene00021468">
    <property type="expression patterns" value="Expressed in embryo and 3 other cell types or tissues"/>
</dbReference>
<dbReference type="GO" id="GO:0005737">
    <property type="term" value="C:cytoplasm"/>
    <property type="evidence" value="ECO:0000314"/>
    <property type="project" value="WormBase"/>
</dbReference>
<dbReference type="GO" id="GO:0016236">
    <property type="term" value="P:macroautophagy"/>
    <property type="evidence" value="ECO:0000315"/>
    <property type="project" value="WormBase"/>
</dbReference>
<dbReference type="GO" id="GO:1902902">
    <property type="term" value="P:negative regulation of autophagosome assembly"/>
    <property type="evidence" value="ECO:0000315"/>
    <property type="project" value="UniProtKB"/>
</dbReference>
<sequence>MSANRTVTVFSSSAEDQEPIELAEDSLQNLDKMLAEEKEEHQLLKDEVVLLRKENVEAKTYSTLLEIMLDEAEEKASSAQETTSEENNLKILNRDLVAENLELKEMKEELRKIWLSDSKKFQEALTRISDENTKLQKDCHELESIRQCAQFALDNCNEELEKTQTENEEHESRIETLEREVCEKDIAMKDIVERKDEISLQLELQTKEFTSALNDLMYGREDTLKQIHQMKENWKVKQNEFEVEITKLKSQNDYFDSERLQLTDRIRALLNELSDVRLELGSTRLAMKEKAEVTEAVTSFNKDLRDKLEDEIARLGECLQFRKDEHEQDEAVIAHLEEQLKLGSDKAAAFSSEHSDTIELLRESETELMELRMENYDLKEDFKILKEEKEDVNRTCECLREQLSTTIQERDIEKGQMQSEMDAKMVAVHQQYAKQIDNMKYNHMLAINQELIKGQMALESGKKKHANEILTVRNELEQSNAAHQSLRDQCSLLLSSEDDLRTAHLALESKMTLVSEECIALRVSRANAQKEIGNLTEHHKLEVALLEDAKSGIQQRLHYATIEIEQLKKINEVTQAQFKKETDEKNAEINEFQAAMVSMKQQYNVLGNHCRVLTSQGISDRTTIDKLQETIREHTELAIETKRIHDAEIVQLNDAHKKLVDNLGVEELDEEPKASTESEEKAEWEMVDEE</sequence>
<evidence type="ECO:0000255" key="1"/>
<evidence type="ECO:0000256" key="2">
    <source>
        <dbReference type="SAM" id="MobiDB-lite"/>
    </source>
</evidence>
<evidence type="ECO:0000269" key="3">
    <source>
    </source>
</evidence>
<evidence type="ECO:0000269" key="4">
    <source>
    </source>
</evidence>
<evidence type="ECO:0000269" key="5">
    <source>
    </source>
</evidence>
<evidence type="ECO:0000269" key="6">
    <source>
    </source>
</evidence>
<evidence type="ECO:0000269" key="7">
    <source>
    </source>
</evidence>
<evidence type="ECO:0000305" key="8"/>
<evidence type="ECO:0000312" key="9">
    <source>
        <dbReference type="WormBase" id="Y39G10AR.10"/>
    </source>
</evidence>
<reference key="1">
    <citation type="journal article" date="1998" name="Science">
        <title>Genome sequence of the nematode C. elegans: a platform for investigating biology.</title>
        <authorList>
            <consortium name="The C. elegans sequencing consortium"/>
        </authorList>
    </citation>
    <scope>NUCLEOTIDE SEQUENCE [LARGE SCALE GENOMIC DNA]</scope>
    <source>
        <strain>Bristol N2</strain>
    </source>
</reference>
<reference evidence="8" key="2">
    <citation type="journal article" date="2010" name="Cell">
        <title>C. elegans screen identifies autophagy genes specific to multicellular organisms.</title>
        <authorList>
            <person name="Tian Y."/>
            <person name="Li Z."/>
            <person name="Hu W."/>
            <person name="Ren H."/>
            <person name="Tian E."/>
            <person name="Zhao Y."/>
            <person name="Lu Q."/>
            <person name="Huang X."/>
            <person name="Yang P."/>
            <person name="Li X."/>
            <person name="Wang X."/>
            <person name="Kovacs A.L."/>
            <person name="Yu L."/>
            <person name="Zhang H."/>
        </authorList>
    </citation>
    <scope>FUNCTION</scope>
    <scope>SUBCELLULAR LOCATION</scope>
    <scope>DEVELOPMENTAL STAGE</scope>
    <scope>DISRUPTION PHENOTYPE</scope>
</reference>
<reference key="3">
    <citation type="journal article" date="2013" name="Mol. Cell">
        <title>Arginine methylation modulates autophagic degradation of PGL granules in C. elegans.</title>
        <authorList>
            <person name="Li S."/>
            <person name="Yang P."/>
            <person name="Tian E."/>
            <person name="Zhang H."/>
        </authorList>
    </citation>
    <scope>FUNCTION</scope>
    <scope>INTERACTION WITH SEPA-1</scope>
    <scope>SUBCELLULAR LOCATION</scope>
    <scope>DEVELOPMENTAL STAGE</scope>
</reference>
<reference key="4">
    <citation type="journal article" date="2014" name="Dev. Cell">
        <title>The C. elegans LC3 acts downstream of GABARAP to degrade autophagosomes by interacting with the HOPS subunit VPS39.</title>
        <authorList>
            <person name="Manil-Segalen M."/>
            <person name="Lefebvre C."/>
            <person name="Jenzer C."/>
            <person name="Trichet M."/>
            <person name="Boulogne C."/>
            <person name="Satiat-Jeunemaitre B."/>
            <person name="Legouis R."/>
        </authorList>
    </citation>
    <scope>FUNCTION</scope>
    <scope>DISRUPTION PHENOTYPE</scope>
</reference>
<reference key="5">
    <citation type="journal article" date="2015" name="Mol. Cell">
        <title>Structural Basis of the Differential Function of the Two C. elegans Atg8 Homologs, LGG-1 and LGG-2, in Autophagy.</title>
        <authorList>
            <person name="Wu F."/>
            <person name="Watanabe Y."/>
            <person name="Guo X.Y."/>
            <person name="Qi X."/>
            <person name="Wang P."/>
            <person name="Zhao H.Y."/>
            <person name="Wang Z."/>
            <person name="Fujioka Y."/>
            <person name="Zhang H."/>
            <person name="Ren J.Q."/>
            <person name="Fang T.C."/>
            <person name="Shen Y.X."/>
            <person name="Feng W."/>
            <person name="Hu J.J."/>
            <person name="Noda N.N."/>
            <person name="Zhang H."/>
        </authorList>
    </citation>
    <scope>INTERACTION WITH LGG-1 AND LGG-2</scope>
    <scope>DOMAIN LIR MOTIF</scope>
    <scope>MUTAGENESIS OF 59-LYS--LEU-64; 381-ASP--LEU-385; 683-GLU--VAL-687; 684-TRP--MET-686; TRP-684; GLU-685 AND VAL-687</scope>
</reference>
<reference key="6">
    <citation type="journal article" date="2017" name="Autophagy">
        <title>The composition of a protein aggregate modulates the specificity and efficiency of its autophagic degradation.</title>
        <authorList>
            <person name="Zhang G."/>
            <person name="Lin L."/>
            <person name="Qi D."/>
            <person name="Zhang H."/>
        </authorList>
    </citation>
    <scope>FUNCTION</scope>
    <scope>INTERACTION WITH SEPA-1</scope>
    <scope>SUBCELLULAR LOCATION</scope>
    <scope>DEVELOPMENTAL STAGE</scope>
    <scope>DISRUPTION PHENOTYPE</scope>
</reference>
<feature type="chain" id="PRO_0000404707" description="Ectopic P granules protein 2">
    <location>
        <begin position="1"/>
        <end position="690"/>
    </location>
</feature>
<feature type="region of interest" description="Required for interaction with lgg-1" evidence="6">
    <location>
        <begin position="381"/>
        <end position="385"/>
    </location>
</feature>
<feature type="region of interest" description="Disordered" evidence="2">
    <location>
        <begin position="666"/>
        <end position="690"/>
    </location>
</feature>
<feature type="coiled-coil region" evidence="1">
    <location>
        <begin position="20"/>
        <end position="181"/>
    </location>
</feature>
<feature type="coiled-coil region" evidence="1">
    <location>
        <begin position="359"/>
        <end position="409"/>
    </location>
</feature>
<feature type="coiled-coil region" evidence="1">
    <location>
        <begin position="458"/>
        <end position="494"/>
    </location>
</feature>
<feature type="coiled-coil region" evidence="1">
    <location>
        <begin position="560"/>
        <end position="643"/>
    </location>
</feature>
<feature type="short sequence motif" description="LIR 1" evidence="6">
    <location>
        <begin position="61"/>
        <end position="64"/>
    </location>
</feature>
<feature type="short sequence motif" description="LIR 2" evidence="6">
    <location>
        <begin position="684"/>
        <end position="687"/>
    </location>
</feature>
<feature type="compositionally biased region" description="Basic and acidic residues" evidence="2">
    <location>
        <begin position="671"/>
        <end position="684"/>
    </location>
</feature>
<feature type="mutagenesis site" description="Impairs the interaction with lgg-1." evidence="6">
    <original>KTYSTL</original>
    <variation>ATASTA</variation>
    <location>
        <begin position="59"/>
        <end position="64"/>
    </location>
</feature>
<feature type="mutagenesis site" description="Abolishes the interaction with lgg-1." evidence="6">
    <original>DFKIL</original>
    <variation>KAKIA</variation>
    <location>
        <begin position="381"/>
        <end position="385"/>
    </location>
</feature>
<feature type="mutagenesis site" description="Impairs the interaction with lgg-1." evidence="6">
    <original>EWEMV</original>
    <variation>KAKMA</variation>
    <location>
        <begin position="683"/>
        <end position="687"/>
    </location>
</feature>
<feature type="mutagenesis site" description="Impairs the interaction with lgg-1. Abolishes the interaction with lgg-2." evidence="6">
    <original>WEM</original>
    <variation>FVE</variation>
    <location>
        <begin position="684"/>
        <end position="686"/>
    </location>
</feature>
<feature type="mutagenesis site" description="Abolishes the interaction with lgg-1." evidence="6">
    <original>W</original>
    <variation>A</variation>
    <location>
        <position position="684"/>
    </location>
</feature>
<feature type="mutagenesis site" description="Abolishes the interaction with lgg-2, but not with lgg-1." evidence="6">
    <original>W</original>
    <variation>F</variation>
    <location>
        <position position="684"/>
    </location>
</feature>
<feature type="mutagenesis site" description="Abolishes the interaction with lgg-1." evidence="6">
    <original>E</original>
    <variation>K</variation>
    <location>
        <position position="685"/>
    </location>
</feature>
<feature type="mutagenesis site" description="Abolishes the interaction with lgg-1." evidence="6">
    <original>V</original>
    <variation>A</variation>
    <location>
        <position position="687"/>
    </location>
</feature>
<organism>
    <name type="scientific">Caenorhabditis elegans</name>
    <dbReference type="NCBI Taxonomy" id="6239"/>
    <lineage>
        <taxon>Eukaryota</taxon>
        <taxon>Metazoa</taxon>
        <taxon>Ecdysozoa</taxon>
        <taxon>Nematoda</taxon>
        <taxon>Chromadorea</taxon>
        <taxon>Rhabditida</taxon>
        <taxon>Rhabditina</taxon>
        <taxon>Rhabditomorpha</taxon>
        <taxon>Rhabditoidea</taxon>
        <taxon>Rhabditidae</taxon>
        <taxon>Peloderinae</taxon>
        <taxon>Caenorhabditis</taxon>
    </lineage>
</organism>
<protein>
    <recommendedName>
        <fullName>Ectopic P granules protein 2</fullName>
    </recommendedName>
</protein>
<comment type="function">
    <text evidence="3 4 5 7">Involved in autophagy (PubMed:20550938, PubMed:24140420, PubMed:24374177). Thought to act as an adapter protein that brings PGL granules to autophagic structures containing lgg-1 (PubMed:20550938). Association with other adapters such as sepa-1 is required for the accumulation and degradation of germ cell specific P-granules by autophagy in somatic cells (PubMed:24140420, PubMed:28806108). This ensures exclusive localization of the P-granules in germ cells (PubMed:24140420, PubMed:28806108). May also play a role in the removal of sepa-1 from somatic cells (PubMed:28806108).</text>
</comment>
<comment type="subunit">
    <text evidence="4 6 7">Interacts with sepa-1 (PubMed:24140420, PubMed:28806108). Interacts (via the LIR motifs) with lgg-1 and lgg-2 (PubMed:26687600). Shows strong interaction with lgg-1 and weak interaction with lgg-2 (PubMed:26687600).</text>
</comment>
<comment type="subcellular location">
    <subcellularLocation>
        <location evidence="3 4 7">Cytoplasm</location>
    </subcellularLocation>
    <text evidence="4">Co-localizes with sepa-1 in cytoplasmic aggregates.</text>
</comment>
<comment type="developmental stage">
    <text evidence="3 4 7">Aggregates of epg-2 peak in abundance at the 100 cell stage then decrease until they are very few at the comma stage (PubMed:20550938, PubMed:28806108). Absent from the 200 stage onwards (PubMed:24140420, PubMed:28806108).</text>
</comment>
<comment type="domain">
    <text evidence="6">The LIR motifs (LC3-interacting region) are required for its interaction with lgg-1 and lgg-2.</text>
</comment>
<comment type="disruption phenotype">
    <text evidence="3 5 7">No colocalization of P-granule components with lgg-1 (PubMed:20550938). Furthermore, there is an accumulation of pgl-3 positive P-granules in somatic cells of embryos (PubMed:28806108). RNAi-mediated knockdown results in increased lgg-2-positive autophagosomes following fertilization and at later embryonic stages (PubMed:24374177).</text>
</comment>